<gene>
    <name evidence="1" type="primary">matK</name>
</gene>
<keyword id="KW-0150">Chloroplast</keyword>
<keyword id="KW-0507">mRNA processing</keyword>
<keyword id="KW-0934">Plastid</keyword>
<keyword id="KW-0694">RNA-binding</keyword>
<keyword id="KW-0819">tRNA processing</keyword>
<evidence type="ECO:0000255" key="1">
    <source>
        <dbReference type="HAMAP-Rule" id="MF_01390"/>
    </source>
</evidence>
<evidence type="ECO:0000305" key="2"/>
<reference key="1">
    <citation type="journal article" date="2004" name="Syst. Bot.">
        <title>Phylogeny and biogeography of Wajira (Leguminosae): a monophyletic segregate of Vigna centered in the horn of Africa region.</title>
        <authorList>
            <person name="Thulin M."/>
            <person name="Lavin M."/>
            <person name="Pasquet R."/>
            <person name="Delgado-Salinas A."/>
        </authorList>
        <dbReference type="AGRICOLA" id="IND43667961"/>
    </citation>
    <scope>NUCLEOTIDE SEQUENCE [GENOMIC DNA]</scope>
</reference>
<reference key="2">
    <citation type="journal article" date="2007" name="BMC Genomics">
        <title>Rapid evolutionary change of common bean (Phaseolus vulgaris L) plastome, and the genomic diversification of legume chloroplasts.</title>
        <authorList>
            <person name="Guo X."/>
            <person name="Castillo-Ramirez S."/>
            <person name="Gonzalez V."/>
            <person name="Bustos P."/>
            <person name="Fernandez-Vazquez J.L."/>
            <person name="Santamaria R.I."/>
            <person name="Arellano J."/>
            <person name="Cevallos M.A."/>
            <person name="Davila G."/>
        </authorList>
    </citation>
    <scope>NUCLEOTIDE SEQUENCE [LARGE SCALE GENOMIC DNA]</scope>
    <source>
        <strain>cv. Negro Jamapa</strain>
    </source>
</reference>
<reference key="3">
    <citation type="submission" date="2007-10" db="EMBL/GenBank/DDBJ databases">
        <title>Complete nucleotide sequence of the plastid genome of the common bean, Phaseolus vulgaris.</title>
        <authorList>
            <person name="Moore M.J."/>
            <person name="Triplett E.W."/>
            <person name="Broughton W.J."/>
            <person name="Soltis P.S."/>
            <person name="Soltis D.E."/>
        </authorList>
    </citation>
    <scope>NUCLEOTIDE SEQUENCE [LARGE SCALE GENOMIC DNA]</scope>
</reference>
<name>MATK_PHAVU</name>
<sequence>MEKYQAYLELRRSRYQDILYPLFFRESIYGLAYGHESFFIENIDYNNKFSLLIVKRLSTRMYQQTNFILFANDSNKKTFGGYNYNFDSQIILEGFGVVVEILFSLQLFISSLRGLESVKSYKNLQSIHSIFPFFEDKLIYLNHKSDIRIPYPIHLEILVQILRYWIKDVSFFHLIRFFFYYYSNWNSLFPPKKGISPFFSKRNLRIFLFLYNLYVWEYESIFLFLRNKSSQLQLKHFRVFFERIFFYEKRKHLVEISTKNCSYTLFFFKDTFIHYVRYQGKSILVLKNTPLLINKWKYYFLYLWQCYFDIWAGPETIYINQLSQYSFHFLGYFLSIPQNLSVVRSQMLKNSFLIKIVIKKLDTIIPIIPLMRSLAKTKFCNVMGHPISKPVWANFSDFYILDRFLRICRNFSHYYNGSAKKKSFYQIKYILRFSCIKTLARKHKSTVRTFLKKLSSEKLLEEFFTEEDLFSLIFPKTSLTLRRFYRGRIWYLDILFRNDFVNHLELKIGYDIL</sequence>
<feature type="chain" id="PRO_0000143586" description="Maturase K">
    <location>
        <begin position="1"/>
        <end position="513"/>
    </location>
</feature>
<feature type="sequence conflict" description="In Ref. 1; AAS94286." evidence="2" ref="1">
    <original>R</original>
    <variation>G</variation>
    <location>
        <position position="163"/>
    </location>
</feature>
<feature type="sequence conflict" description="In Ref. 1; AAS94286." evidence="2" ref="1">
    <original>L</original>
    <variation>V</variation>
    <location>
        <position position="174"/>
    </location>
</feature>
<feature type="sequence conflict" description="In Ref. 1; AAS94286." evidence="2" ref="1">
    <original>P</original>
    <variation>T</variation>
    <location>
        <position position="197"/>
    </location>
</feature>
<feature type="sequence conflict" description="In Ref. 1; AAS94286." evidence="2" ref="1">
    <original>I</original>
    <variation>R</variation>
    <location>
        <position position="364"/>
    </location>
</feature>
<proteinExistence type="inferred from homology"/>
<comment type="function">
    <text evidence="1">Usually encoded in the trnK tRNA gene intron. Probably assists in splicing its own and other chloroplast group II introns.</text>
</comment>
<comment type="subcellular location">
    <subcellularLocation>
        <location>Plastid</location>
        <location>Chloroplast</location>
    </subcellularLocation>
</comment>
<comment type="similarity">
    <text evidence="1">Belongs to the intron maturase 2 family. MatK subfamily.</text>
</comment>
<dbReference type="EMBL" id="AY582987">
    <property type="protein sequence ID" value="AAS94286.1"/>
    <property type="molecule type" value="Genomic_DNA"/>
</dbReference>
<dbReference type="EMBL" id="DQ886273">
    <property type="protein sequence ID" value="ABH88069.1"/>
    <property type="molecule type" value="Genomic_DNA"/>
</dbReference>
<dbReference type="EMBL" id="EU196765">
    <property type="protein sequence ID" value="ABW22799.1"/>
    <property type="molecule type" value="Genomic_DNA"/>
</dbReference>
<dbReference type="RefSeq" id="YP_001122789.1">
    <property type="nucleotide sequence ID" value="NC_009259.1"/>
</dbReference>
<dbReference type="GeneID" id="4961751"/>
<dbReference type="KEGG" id="pvu:4961751"/>
<dbReference type="PhylomeDB" id="Q6PSC6"/>
<dbReference type="GO" id="GO:0009507">
    <property type="term" value="C:chloroplast"/>
    <property type="evidence" value="ECO:0007669"/>
    <property type="project" value="UniProtKB-SubCell"/>
</dbReference>
<dbReference type="GO" id="GO:0003723">
    <property type="term" value="F:RNA binding"/>
    <property type="evidence" value="ECO:0007669"/>
    <property type="project" value="UniProtKB-KW"/>
</dbReference>
<dbReference type="GO" id="GO:0006397">
    <property type="term" value="P:mRNA processing"/>
    <property type="evidence" value="ECO:0007669"/>
    <property type="project" value="UniProtKB-KW"/>
</dbReference>
<dbReference type="GO" id="GO:0008380">
    <property type="term" value="P:RNA splicing"/>
    <property type="evidence" value="ECO:0007669"/>
    <property type="project" value="UniProtKB-UniRule"/>
</dbReference>
<dbReference type="GO" id="GO:0008033">
    <property type="term" value="P:tRNA processing"/>
    <property type="evidence" value="ECO:0007669"/>
    <property type="project" value="UniProtKB-KW"/>
</dbReference>
<dbReference type="HAMAP" id="MF_01390">
    <property type="entry name" value="MatK"/>
    <property type="match status" value="1"/>
</dbReference>
<dbReference type="InterPro" id="IPR024937">
    <property type="entry name" value="Domain_X"/>
</dbReference>
<dbReference type="InterPro" id="IPR002866">
    <property type="entry name" value="Maturase_MatK"/>
</dbReference>
<dbReference type="InterPro" id="IPR024942">
    <property type="entry name" value="Maturase_MatK_N"/>
</dbReference>
<dbReference type="PANTHER" id="PTHR34811">
    <property type="entry name" value="MATURASE K"/>
    <property type="match status" value="1"/>
</dbReference>
<dbReference type="PANTHER" id="PTHR34811:SF1">
    <property type="entry name" value="MATURASE K"/>
    <property type="match status" value="1"/>
</dbReference>
<dbReference type="Pfam" id="PF01348">
    <property type="entry name" value="Intron_maturas2"/>
    <property type="match status" value="1"/>
</dbReference>
<dbReference type="Pfam" id="PF01824">
    <property type="entry name" value="MatK_N"/>
    <property type="match status" value="1"/>
</dbReference>
<protein>
    <recommendedName>
        <fullName evidence="1">Maturase K</fullName>
    </recommendedName>
    <alternativeName>
        <fullName evidence="1">Intron maturase</fullName>
    </alternativeName>
</protein>
<geneLocation type="chloroplast"/>
<organism>
    <name type="scientific">Phaseolus vulgaris</name>
    <name type="common">Kidney bean</name>
    <name type="synonym">French bean</name>
    <dbReference type="NCBI Taxonomy" id="3885"/>
    <lineage>
        <taxon>Eukaryota</taxon>
        <taxon>Viridiplantae</taxon>
        <taxon>Streptophyta</taxon>
        <taxon>Embryophyta</taxon>
        <taxon>Tracheophyta</taxon>
        <taxon>Spermatophyta</taxon>
        <taxon>Magnoliopsida</taxon>
        <taxon>eudicotyledons</taxon>
        <taxon>Gunneridae</taxon>
        <taxon>Pentapetalae</taxon>
        <taxon>rosids</taxon>
        <taxon>fabids</taxon>
        <taxon>Fabales</taxon>
        <taxon>Fabaceae</taxon>
        <taxon>Papilionoideae</taxon>
        <taxon>50 kb inversion clade</taxon>
        <taxon>NPAAA clade</taxon>
        <taxon>indigoferoid/millettioid clade</taxon>
        <taxon>Phaseoleae</taxon>
        <taxon>Phaseolus</taxon>
    </lineage>
</organism>
<accession>Q6PSC6</accession>
<accession>A4GG88</accession>
<accession>A8W829</accession>